<organism>
    <name type="scientific">Aspergillus niger</name>
    <dbReference type="NCBI Taxonomy" id="5061"/>
    <lineage>
        <taxon>Eukaryota</taxon>
        <taxon>Fungi</taxon>
        <taxon>Dikarya</taxon>
        <taxon>Ascomycota</taxon>
        <taxon>Pezizomycotina</taxon>
        <taxon>Eurotiomycetes</taxon>
        <taxon>Eurotiomycetidae</taxon>
        <taxon>Eurotiales</taxon>
        <taxon>Aspergillaceae</taxon>
        <taxon>Aspergillus</taxon>
        <taxon>Aspergillus subgen. Circumdati</taxon>
    </lineage>
</organism>
<accession>Q05620</accession>
<gene>
    <name type="primary">creA</name>
</gene>
<protein>
    <recommendedName>
        <fullName>DNA-binding protein creA</fullName>
    </recommendedName>
    <alternativeName>
        <fullName>Carbon catabolite repressor A</fullName>
    </alternativeName>
</protein>
<feature type="chain" id="PRO_0000046871" description="DNA-binding protein creA">
    <location>
        <begin position="1"/>
        <end position="427"/>
    </location>
</feature>
<feature type="zinc finger region" description="C2H2-type 1" evidence="2">
    <location>
        <begin position="76"/>
        <end position="98"/>
    </location>
</feature>
<feature type="zinc finger region" description="C2H2-type 2" evidence="2">
    <location>
        <begin position="104"/>
        <end position="128"/>
    </location>
</feature>
<feature type="region of interest" description="Disordered" evidence="3">
    <location>
        <begin position="1"/>
        <end position="49"/>
    </location>
</feature>
<feature type="region of interest" description="Disordered" evidence="3">
    <location>
        <begin position="117"/>
        <end position="136"/>
    </location>
</feature>
<feature type="region of interest" description="Disordered" evidence="3">
    <location>
        <begin position="159"/>
        <end position="185"/>
    </location>
</feature>
<feature type="region of interest" description="Disordered" evidence="3">
    <location>
        <begin position="269"/>
        <end position="333"/>
    </location>
</feature>
<feature type="region of interest" description="Disordered" evidence="3">
    <location>
        <begin position="348"/>
        <end position="427"/>
    </location>
</feature>
<feature type="compositionally biased region" description="Low complexity" evidence="3">
    <location>
        <begin position="15"/>
        <end position="49"/>
    </location>
</feature>
<feature type="compositionally biased region" description="Low complexity" evidence="3">
    <location>
        <begin position="289"/>
        <end position="303"/>
    </location>
</feature>
<feature type="compositionally biased region" description="Polar residues" evidence="3">
    <location>
        <begin position="405"/>
        <end position="417"/>
    </location>
</feature>
<comment type="function">
    <text evidence="1">Transcription regulator component of the regulatory network controlling carbon source utilization through ubiquitination and deubiquitination involving creA, creB, creC, creD and acrB. Represses the transcription of the alcR, alcA and aldA genes by binding to a GC-rich region in their promoter. Also plays a role in response to carbon starvation and the control of extracellular proteases activity (By similarity).</text>
</comment>
<comment type="subunit">
    <text evidence="1">Interacts with creB.</text>
</comment>
<comment type="subcellular location">
    <subcellularLocation>
        <location evidence="1">Nucleus</location>
    </subcellularLocation>
</comment>
<comment type="PTM">
    <text evidence="1">Ubiquitinated. Deubiquitinated by creB, probably to control its activity or amount (By similarity).</text>
</comment>
<comment type="similarity">
    <text evidence="4">Belongs to the creA/MIG C2H2-type zinc-finger protein family.</text>
</comment>
<reference key="1">
    <citation type="journal article" date="1993" name="Gene">
        <title>The Aspergillus niger carbon catabolite repressor encoding gene, creA.</title>
        <authorList>
            <person name="Drysdale M.R."/>
            <person name="Kolze S.E."/>
            <person name="Kelly J.M."/>
        </authorList>
    </citation>
    <scope>NUCLEOTIDE SEQUENCE [GENOMIC DNA]</scope>
</reference>
<name>CREA_ASPNG</name>
<dbReference type="EMBL" id="L03811">
    <property type="protein sequence ID" value="AAA32690.1"/>
    <property type="molecule type" value="Genomic_DNA"/>
</dbReference>
<dbReference type="PIR" id="JN0785">
    <property type="entry name" value="JN0785"/>
</dbReference>
<dbReference type="SMR" id="Q05620"/>
<dbReference type="PaxDb" id="5061-CADANGAP00001839"/>
<dbReference type="VEuPathDB" id="FungiDB:An02g03830"/>
<dbReference type="VEuPathDB" id="FungiDB:ASPNIDRAFT2_1020757"/>
<dbReference type="VEuPathDB" id="FungiDB:ATCC64974_62010"/>
<dbReference type="VEuPathDB" id="FungiDB:M747DRAFT_54685"/>
<dbReference type="eggNOG" id="KOG1721">
    <property type="taxonomic scope" value="Eukaryota"/>
</dbReference>
<dbReference type="GO" id="GO:0005737">
    <property type="term" value="C:cytoplasm"/>
    <property type="evidence" value="ECO:0007669"/>
    <property type="project" value="TreeGrafter"/>
</dbReference>
<dbReference type="GO" id="GO:0005634">
    <property type="term" value="C:nucleus"/>
    <property type="evidence" value="ECO:0007669"/>
    <property type="project" value="UniProtKB-SubCell"/>
</dbReference>
<dbReference type="GO" id="GO:0000978">
    <property type="term" value="F:RNA polymerase II cis-regulatory region sequence-specific DNA binding"/>
    <property type="evidence" value="ECO:0007669"/>
    <property type="project" value="TreeGrafter"/>
</dbReference>
<dbReference type="GO" id="GO:0008270">
    <property type="term" value="F:zinc ion binding"/>
    <property type="evidence" value="ECO:0007669"/>
    <property type="project" value="UniProtKB-KW"/>
</dbReference>
<dbReference type="GO" id="GO:0000433">
    <property type="term" value="P:carbon catabolite repression of transcription from RNA polymerase II promoter by glucose"/>
    <property type="evidence" value="ECO:0007669"/>
    <property type="project" value="TreeGrafter"/>
</dbReference>
<dbReference type="FunFam" id="3.30.160.60:FF:000089">
    <property type="entry name" value="DNA-binding protein creA"/>
    <property type="match status" value="1"/>
</dbReference>
<dbReference type="FunFam" id="3.30.160.60:FF:000152">
    <property type="entry name" value="DNA-binding protein creA"/>
    <property type="match status" value="1"/>
</dbReference>
<dbReference type="Gene3D" id="3.30.160.60">
    <property type="entry name" value="Classic Zinc Finger"/>
    <property type="match status" value="2"/>
</dbReference>
<dbReference type="InterPro" id="IPR051007">
    <property type="entry name" value="creA/MIG_C2H2-ZnF"/>
</dbReference>
<dbReference type="InterPro" id="IPR036236">
    <property type="entry name" value="Znf_C2H2_sf"/>
</dbReference>
<dbReference type="InterPro" id="IPR013087">
    <property type="entry name" value="Znf_C2H2_type"/>
</dbReference>
<dbReference type="PANTHER" id="PTHR47428">
    <property type="entry name" value="REGULATORY PROTEIN MIG1-RELATED"/>
    <property type="match status" value="1"/>
</dbReference>
<dbReference type="PANTHER" id="PTHR47428:SF1">
    <property type="entry name" value="REGULATORY PROTEIN MIG1-RELATED"/>
    <property type="match status" value="1"/>
</dbReference>
<dbReference type="Pfam" id="PF00096">
    <property type="entry name" value="zf-C2H2"/>
    <property type="match status" value="2"/>
</dbReference>
<dbReference type="SMART" id="SM00355">
    <property type="entry name" value="ZnF_C2H2"/>
    <property type="match status" value="2"/>
</dbReference>
<dbReference type="SUPFAM" id="SSF57667">
    <property type="entry name" value="beta-beta-alpha zinc fingers"/>
    <property type="match status" value="1"/>
</dbReference>
<dbReference type="PROSITE" id="PS00028">
    <property type="entry name" value="ZINC_FINGER_C2H2_1"/>
    <property type="match status" value="2"/>
</dbReference>
<dbReference type="PROSITE" id="PS50157">
    <property type="entry name" value="ZINC_FINGER_C2H2_2"/>
    <property type="match status" value="2"/>
</dbReference>
<proteinExistence type="inferred from homology"/>
<evidence type="ECO:0000250" key="1"/>
<evidence type="ECO:0000255" key="2">
    <source>
        <dbReference type="PROSITE-ProRule" id="PRU00042"/>
    </source>
</evidence>
<evidence type="ECO:0000256" key="3">
    <source>
        <dbReference type="SAM" id="MobiDB-lite"/>
    </source>
</evidence>
<evidence type="ECO:0000305" key="4"/>
<sequence length="427" mass="46141">MPPPASSVDFSNLLNPQNNSTDSTPSTPVDSSKTPSTPSSTQSNSNMASSVSLLPPLMKGARPATEEVRQDLPRPYKCPLCDRAFHRLEHQTRHIRTHTGEKPHACQFPGCTKRFSRSDELTRHSRIHNNPNSRRRNKAQHLAAAAAAAAGQDNAMANTASAMMPPPSKPMTRSAPVSQVGSPDISPPHSFSNYASHMRSNLGPYARKGDEASSGMELYLLATAASQVERDEHFDFHAGPRNHHLFSSRHHGSGRLPLLAAYAITHNMSRSHSPEDDDGYSHRVKRSRPNSPNSTAPSSPTFSHDSLSPTPDHTPLATPAHSPRLRPLGSSDLHLPSIRHLSLHHTPALAPMEPQPEGPNYYSPSQGHHGPSISDIMSKPDGTQRKLPVPQVPKVAVQDMLNPGSGFSSVHSSTANSVAGGDLAERF</sequence>
<keyword id="KW-0238">DNA-binding</keyword>
<keyword id="KW-0479">Metal-binding</keyword>
<keyword id="KW-0539">Nucleus</keyword>
<keyword id="KW-0677">Repeat</keyword>
<keyword id="KW-0678">Repressor</keyword>
<keyword id="KW-0804">Transcription</keyword>
<keyword id="KW-0805">Transcription regulation</keyword>
<keyword id="KW-0832">Ubl conjugation</keyword>
<keyword id="KW-0862">Zinc</keyword>
<keyword id="KW-0863">Zinc-finger</keyword>